<comment type="function">
    <text>Binds microtubules.</text>
</comment>
<comment type="interaction">
    <interactant intactId="EBI-3614">
        <id>P40013</id>
    </interactant>
    <interactant intactId="EBI-23268">
        <id>P53267</id>
        <label>DAM1</label>
    </interactant>
    <organismsDiffer>false</organismsDiffer>
    <experiments>2</experiments>
</comment>
<comment type="subcellular location">
    <subcellularLocation>
        <location>Cytoplasm</location>
        <location>Cytoskeleton</location>
    </subcellularLocation>
</comment>
<comment type="miscellaneous">
    <text evidence="4">Present with 3630 molecules/cell in log phase SD medium.</text>
</comment>
<comment type="similarity">
    <text evidence="5">Belongs to the MAPRE family.</text>
</comment>
<sequence>MSAGIGESRTELLTWLNGLLNLNYKKIEECGTGAAYCQIMDSIYGDLPMNRVKFNATAEYEFQTNYKILQSCFSRHGIEKTVYVDKLIRCKFQDNLEFLQWLKKHWIRHKDESVYDPDARRKYRPIITNNSATKPRTVSNPTTAKRSSSTGTGSAMSGGLATRHSSLGINGSRKTSVTQGQLVAIQAELTKSQETIGSLNEEIEQYKGTVSTLEIEREFYFNKLRDIEILVHTTQDLINEGVYKFNDETITGHGNGNGGALLRFVKKVESILYATAEGFEMNDGEDELNDKNLGEHGTVPNQGGYANSNGEVNGNEGSNHDVIMQNDEGEVGVSNNLIIDEETF</sequence>
<organism>
    <name type="scientific">Saccharomyces cerevisiae (strain ATCC 204508 / S288c)</name>
    <name type="common">Baker's yeast</name>
    <dbReference type="NCBI Taxonomy" id="559292"/>
    <lineage>
        <taxon>Eukaryota</taxon>
        <taxon>Fungi</taxon>
        <taxon>Dikarya</taxon>
        <taxon>Ascomycota</taxon>
        <taxon>Saccharomycotina</taxon>
        <taxon>Saccharomycetes</taxon>
        <taxon>Saccharomycetales</taxon>
        <taxon>Saccharomycetaceae</taxon>
        <taxon>Saccharomyces</taxon>
    </lineage>
</organism>
<feature type="initiator methionine" description="Removed" evidence="7">
    <location>
        <position position="1"/>
    </location>
</feature>
<feature type="chain" id="PRO_0000213432" description="Protein BIM1">
    <location>
        <begin position="2"/>
        <end position="344"/>
    </location>
</feature>
<feature type="domain" description="Calponin-homology (CH)" evidence="1">
    <location>
        <begin position="6"/>
        <end position="107"/>
    </location>
</feature>
<feature type="domain" description="EB1 C-terminal" evidence="2">
    <location>
        <begin position="188"/>
        <end position="281"/>
    </location>
</feature>
<feature type="region of interest" description="Disordered" evidence="3">
    <location>
        <begin position="126"/>
        <end position="173"/>
    </location>
</feature>
<feature type="region of interest" description="Disordered" evidence="3">
    <location>
        <begin position="292"/>
        <end position="312"/>
    </location>
</feature>
<feature type="compositionally biased region" description="Polar residues" evidence="3">
    <location>
        <begin position="127"/>
        <end position="146"/>
    </location>
</feature>
<feature type="compositionally biased region" description="Low complexity" evidence="3">
    <location>
        <begin position="147"/>
        <end position="159"/>
    </location>
</feature>
<feature type="compositionally biased region" description="Polar residues" evidence="3">
    <location>
        <begin position="163"/>
        <end position="173"/>
    </location>
</feature>
<feature type="modified residue" description="N-acetylserine" evidence="7">
    <location>
        <position position="2"/>
    </location>
</feature>
<feature type="modified residue" description="Phosphoserine" evidence="6">
    <location>
        <position position="157"/>
    </location>
</feature>
<feature type="helix" evidence="8">
    <location>
        <begin position="9"/>
        <end position="20"/>
    </location>
</feature>
<feature type="helix" evidence="8">
    <location>
        <begin position="27"/>
        <end position="32"/>
    </location>
</feature>
<feature type="helix" evidence="8">
    <location>
        <begin position="34"/>
        <end position="44"/>
    </location>
</feature>
<feature type="helix" evidence="8">
    <location>
        <begin position="49"/>
        <end position="51"/>
    </location>
</feature>
<feature type="helix" evidence="8">
    <location>
        <begin position="59"/>
        <end position="75"/>
    </location>
</feature>
<feature type="helix" evidence="8">
    <location>
        <begin position="84"/>
        <end position="87"/>
    </location>
</feature>
<feature type="turn" evidence="8">
    <location>
        <begin position="88"/>
        <end position="90"/>
    </location>
</feature>
<feature type="helix" evidence="8">
    <location>
        <begin position="92"/>
        <end position="109"/>
    </location>
</feature>
<feature type="helix" evidence="8">
    <location>
        <begin position="117"/>
        <end position="120"/>
    </location>
</feature>
<feature type="turn" evidence="8">
    <location>
        <begin position="121"/>
        <end position="123"/>
    </location>
</feature>
<feature type="helix" evidence="9">
    <location>
        <begin position="182"/>
        <end position="239"/>
    </location>
</feature>
<feature type="helix" evidence="9">
    <location>
        <begin position="260"/>
        <end position="277"/>
    </location>
</feature>
<name>BIM1_YEAST</name>
<keyword id="KW-0002">3D-structure</keyword>
<keyword id="KW-0007">Acetylation</keyword>
<keyword id="KW-0131">Cell cycle</keyword>
<keyword id="KW-0132">Cell division</keyword>
<keyword id="KW-0963">Cytoplasm</keyword>
<keyword id="KW-0206">Cytoskeleton</keyword>
<keyword id="KW-0493">Microtubule</keyword>
<keyword id="KW-0498">Mitosis</keyword>
<keyword id="KW-0597">Phosphoprotein</keyword>
<keyword id="KW-1185">Reference proteome</keyword>
<protein>
    <recommendedName>
        <fullName>Protein BIM1</fullName>
    </recommendedName>
</protein>
<accession>P40013</accession>
<accession>D3DLR4</accession>
<evidence type="ECO:0000255" key="1">
    <source>
        <dbReference type="PROSITE-ProRule" id="PRU00044"/>
    </source>
</evidence>
<evidence type="ECO:0000255" key="2">
    <source>
        <dbReference type="PROSITE-ProRule" id="PRU00576"/>
    </source>
</evidence>
<evidence type="ECO:0000256" key="3">
    <source>
        <dbReference type="SAM" id="MobiDB-lite"/>
    </source>
</evidence>
<evidence type="ECO:0000269" key="4">
    <source>
    </source>
</evidence>
<evidence type="ECO:0000305" key="5"/>
<evidence type="ECO:0007744" key="6">
    <source>
    </source>
</evidence>
<evidence type="ECO:0007744" key="7">
    <source>
    </source>
</evidence>
<evidence type="ECO:0007829" key="8">
    <source>
        <dbReference type="PDB" id="2QJX"/>
    </source>
</evidence>
<evidence type="ECO:0007829" key="9">
    <source>
        <dbReference type="PDB" id="4E61"/>
    </source>
</evidence>
<reference key="1">
    <citation type="journal article" date="1997" name="Nature">
        <title>The nucleotide sequence of Saccharomyces cerevisiae chromosome V.</title>
        <authorList>
            <person name="Dietrich F.S."/>
            <person name="Mulligan J.T."/>
            <person name="Hennessy K.M."/>
            <person name="Yelton M.A."/>
            <person name="Allen E."/>
            <person name="Araujo R."/>
            <person name="Aviles E."/>
            <person name="Berno A."/>
            <person name="Brennan T."/>
            <person name="Carpenter J."/>
            <person name="Chen E."/>
            <person name="Cherry J.M."/>
            <person name="Chung E."/>
            <person name="Duncan M."/>
            <person name="Guzman E."/>
            <person name="Hartzell G."/>
            <person name="Hunicke-Smith S."/>
            <person name="Hyman R.W."/>
            <person name="Kayser A."/>
            <person name="Komp C."/>
            <person name="Lashkari D."/>
            <person name="Lew H."/>
            <person name="Lin D."/>
            <person name="Mosedale D."/>
            <person name="Nakahara K."/>
            <person name="Namath A."/>
            <person name="Norgren R."/>
            <person name="Oefner P."/>
            <person name="Oh C."/>
            <person name="Petel F.X."/>
            <person name="Roberts D."/>
            <person name="Sehl P."/>
            <person name="Schramm S."/>
            <person name="Shogren T."/>
            <person name="Smith V."/>
            <person name="Taylor P."/>
            <person name="Wei Y."/>
            <person name="Botstein D."/>
            <person name="Davis R.W."/>
        </authorList>
    </citation>
    <scope>NUCLEOTIDE SEQUENCE [LARGE SCALE GENOMIC DNA]</scope>
    <source>
        <strain>ATCC 204508 / S288c</strain>
    </source>
</reference>
<reference key="2">
    <citation type="journal article" date="2014" name="G3 (Bethesda)">
        <title>The reference genome sequence of Saccharomyces cerevisiae: Then and now.</title>
        <authorList>
            <person name="Engel S.R."/>
            <person name="Dietrich F.S."/>
            <person name="Fisk D.G."/>
            <person name="Binkley G."/>
            <person name="Balakrishnan R."/>
            <person name="Costanzo M.C."/>
            <person name="Dwight S.S."/>
            <person name="Hitz B.C."/>
            <person name="Karra K."/>
            <person name="Nash R.S."/>
            <person name="Weng S."/>
            <person name="Wong E.D."/>
            <person name="Lloyd P."/>
            <person name="Skrzypek M.S."/>
            <person name="Miyasato S.R."/>
            <person name="Simison M."/>
            <person name="Cherry J.M."/>
        </authorList>
    </citation>
    <scope>GENOME REANNOTATION</scope>
    <source>
        <strain>ATCC 204508 / S288c</strain>
    </source>
</reference>
<reference key="3">
    <citation type="journal article" date="1997" name="Mol. Biol. Cell">
        <title>BIM1 encodes a microtubule-binding protein in yeast.</title>
        <authorList>
            <person name="Schwartz K."/>
            <person name="Richards K."/>
            <person name="Botstein D."/>
        </authorList>
    </citation>
    <scope>CHARACTERIZATION</scope>
</reference>
<reference key="4">
    <citation type="journal article" date="2003" name="Nature">
        <title>Global analysis of protein expression in yeast.</title>
        <authorList>
            <person name="Ghaemmaghami S."/>
            <person name="Huh W.-K."/>
            <person name="Bower K."/>
            <person name="Howson R.W."/>
            <person name="Belle A."/>
            <person name="Dephoure N."/>
            <person name="O'Shea E.K."/>
            <person name="Weissman J.S."/>
        </authorList>
    </citation>
    <scope>LEVEL OF PROTEIN EXPRESSION [LARGE SCALE ANALYSIS]</scope>
</reference>
<reference key="5">
    <citation type="journal article" date="2007" name="J. Proteome Res.">
        <title>Large-scale phosphorylation analysis of alpha-factor-arrested Saccharomyces cerevisiae.</title>
        <authorList>
            <person name="Li X."/>
            <person name="Gerber S.A."/>
            <person name="Rudner A.D."/>
            <person name="Beausoleil S.A."/>
            <person name="Haas W."/>
            <person name="Villen J."/>
            <person name="Elias J.E."/>
            <person name="Gygi S.P."/>
        </authorList>
    </citation>
    <scope>IDENTIFICATION BY MASS SPECTROMETRY [LARGE SCALE ANALYSIS]</scope>
    <source>
        <strain>ADR376</strain>
    </source>
</reference>
<reference key="6">
    <citation type="journal article" date="2007" name="Proc. Natl. Acad. Sci. U.S.A.">
        <title>Analysis of phosphorylation sites on proteins from Saccharomyces cerevisiae by electron transfer dissociation (ETD) mass spectrometry.</title>
        <authorList>
            <person name="Chi A."/>
            <person name="Huttenhower C."/>
            <person name="Geer L.Y."/>
            <person name="Coon J.J."/>
            <person name="Syka J.E.P."/>
            <person name="Bai D.L."/>
            <person name="Shabanowitz J."/>
            <person name="Burke D.J."/>
            <person name="Troyanskaya O.G."/>
            <person name="Hunt D.F."/>
        </authorList>
    </citation>
    <scope>PHOSPHORYLATION [LARGE SCALE ANALYSIS] AT SER-157</scope>
    <scope>IDENTIFICATION BY MASS SPECTROMETRY [LARGE SCALE ANALYSIS]</scope>
</reference>
<reference key="7">
    <citation type="journal article" date="2008" name="Mol. Cell. Proteomics">
        <title>A multidimensional chromatography technology for in-depth phosphoproteome analysis.</title>
        <authorList>
            <person name="Albuquerque C.P."/>
            <person name="Smolka M.B."/>
            <person name="Payne S.H."/>
            <person name="Bafna V."/>
            <person name="Eng J."/>
            <person name="Zhou H."/>
        </authorList>
    </citation>
    <scope>IDENTIFICATION BY MASS SPECTROMETRY [LARGE SCALE ANALYSIS]</scope>
</reference>
<reference key="8">
    <citation type="journal article" date="2009" name="Science">
        <title>Global analysis of Cdk1 substrate phosphorylation sites provides insights into evolution.</title>
        <authorList>
            <person name="Holt L.J."/>
            <person name="Tuch B.B."/>
            <person name="Villen J."/>
            <person name="Johnson A.D."/>
            <person name="Gygi S.P."/>
            <person name="Morgan D.O."/>
        </authorList>
    </citation>
    <scope>IDENTIFICATION BY MASS SPECTROMETRY [LARGE SCALE ANALYSIS]</scope>
</reference>
<reference key="9">
    <citation type="journal article" date="2012" name="Proc. Natl. Acad. Sci. U.S.A.">
        <title>N-terminal acetylome analyses and functional insights of the N-terminal acetyltransferase NatB.</title>
        <authorList>
            <person name="Van Damme P."/>
            <person name="Lasa M."/>
            <person name="Polevoda B."/>
            <person name="Gazquez C."/>
            <person name="Elosegui-Artola A."/>
            <person name="Kim D.S."/>
            <person name="De Juan-Pardo E."/>
            <person name="Demeyer K."/>
            <person name="Hole K."/>
            <person name="Larrea E."/>
            <person name="Timmerman E."/>
            <person name="Prieto J."/>
            <person name="Arnesen T."/>
            <person name="Sherman F."/>
            <person name="Gevaert K."/>
            <person name="Aldabe R."/>
        </authorList>
    </citation>
    <scope>ACETYLATION [LARGE SCALE ANALYSIS] AT SER-2</scope>
    <scope>CLEAVAGE OF INITIATOR METHIONINE [LARGE SCALE ANALYSIS]</scope>
    <scope>IDENTIFICATION BY MASS SPECTROMETRY [LARGE SCALE ANALYSIS]</scope>
</reference>
<proteinExistence type="evidence at protein level"/>
<dbReference type="EMBL" id="U18778">
    <property type="protein sequence ID" value="AAB64549.1"/>
    <property type="molecule type" value="Genomic_DNA"/>
</dbReference>
<dbReference type="EMBL" id="BK006939">
    <property type="protein sequence ID" value="DAA07668.1"/>
    <property type="molecule type" value="Genomic_DNA"/>
</dbReference>
<dbReference type="PIR" id="S50474">
    <property type="entry name" value="S50474"/>
</dbReference>
<dbReference type="RefSeq" id="NP_010932.1">
    <property type="nucleotide sequence ID" value="NM_001178907.1"/>
</dbReference>
<dbReference type="PDB" id="2QJX">
    <property type="method" value="X-ray"/>
    <property type="resolution" value="1.90 A"/>
    <property type="chains" value="A=1-124"/>
</dbReference>
<dbReference type="PDB" id="4E61">
    <property type="method" value="X-ray"/>
    <property type="resolution" value="2.45 A"/>
    <property type="chains" value="A/B=182-282"/>
</dbReference>
<dbReference type="PDB" id="6FC6">
    <property type="method" value="X-ray"/>
    <property type="resolution" value="1.80 A"/>
    <property type="chains" value="B=334-344"/>
</dbReference>
<dbReference type="PDBsum" id="2QJX"/>
<dbReference type="PDBsum" id="4E61"/>
<dbReference type="PDBsum" id="6FC6"/>
<dbReference type="SMR" id="P40013"/>
<dbReference type="BioGRID" id="36749">
    <property type="interactions" value="570"/>
</dbReference>
<dbReference type="DIP" id="DIP-1295N"/>
<dbReference type="FunCoup" id="P40013">
    <property type="interactions" value="896"/>
</dbReference>
<dbReference type="IntAct" id="P40013">
    <property type="interactions" value="17"/>
</dbReference>
<dbReference type="MINT" id="P40013"/>
<dbReference type="STRING" id="4932.YER016W"/>
<dbReference type="iPTMnet" id="P40013"/>
<dbReference type="PaxDb" id="4932-YER016W"/>
<dbReference type="PeptideAtlas" id="P40013"/>
<dbReference type="EnsemblFungi" id="YER016W_mRNA">
    <property type="protein sequence ID" value="YER016W"/>
    <property type="gene ID" value="YER016W"/>
</dbReference>
<dbReference type="GeneID" id="856736"/>
<dbReference type="KEGG" id="sce:YER016W"/>
<dbReference type="AGR" id="SGD:S000000818"/>
<dbReference type="SGD" id="S000000818">
    <property type="gene designation" value="BIM1"/>
</dbReference>
<dbReference type="VEuPathDB" id="FungiDB:YER016W"/>
<dbReference type="eggNOG" id="KOG3000">
    <property type="taxonomic scope" value="Eukaryota"/>
</dbReference>
<dbReference type="GeneTree" id="ENSGT00490000043329"/>
<dbReference type="HOGENOM" id="CLU_041744_2_0_1"/>
<dbReference type="InParanoid" id="P40013"/>
<dbReference type="OMA" id="WIKRFWD"/>
<dbReference type="OrthoDB" id="2119228at2759"/>
<dbReference type="BioCyc" id="YEAST:G3O-30201-MONOMER"/>
<dbReference type="BioGRID-ORCS" id="856736">
    <property type="hits" value="7 hits in 10 CRISPR screens"/>
</dbReference>
<dbReference type="CD-CODE" id="F813C9D9">
    <property type="entry name" value="TIP body"/>
</dbReference>
<dbReference type="EvolutionaryTrace" id="P40013"/>
<dbReference type="PRO" id="PR:P40013"/>
<dbReference type="Proteomes" id="UP000002311">
    <property type="component" value="Chromosome V"/>
</dbReference>
<dbReference type="RNAct" id="P40013">
    <property type="molecule type" value="protein"/>
</dbReference>
<dbReference type="GO" id="GO:0005881">
    <property type="term" value="C:cytoplasmic microtubule"/>
    <property type="evidence" value="ECO:0000314"/>
    <property type="project" value="SGD"/>
</dbReference>
<dbReference type="GO" id="GO:0005815">
    <property type="term" value="C:microtubule organizing center"/>
    <property type="evidence" value="ECO:0000318"/>
    <property type="project" value="GO_Central"/>
</dbReference>
<dbReference type="GO" id="GO:0035371">
    <property type="term" value="C:microtubule plus-end"/>
    <property type="evidence" value="ECO:0000314"/>
    <property type="project" value="SGD"/>
</dbReference>
<dbReference type="GO" id="GO:0072686">
    <property type="term" value="C:mitotic spindle"/>
    <property type="evidence" value="ECO:0000314"/>
    <property type="project" value="SGD"/>
</dbReference>
<dbReference type="GO" id="GO:0051233">
    <property type="term" value="C:spindle midzone"/>
    <property type="evidence" value="ECO:0000314"/>
    <property type="project" value="SGD"/>
</dbReference>
<dbReference type="GO" id="GO:0000922">
    <property type="term" value="C:spindle pole"/>
    <property type="evidence" value="ECO:0000314"/>
    <property type="project" value="SGD"/>
</dbReference>
<dbReference type="GO" id="GO:0051010">
    <property type="term" value="F:microtubule plus-end binding"/>
    <property type="evidence" value="ECO:0000314"/>
    <property type="project" value="SGD"/>
</dbReference>
<dbReference type="GO" id="GO:0030543">
    <property type="term" value="P:2-micrometer plasmid partitioning"/>
    <property type="evidence" value="ECO:0000315"/>
    <property type="project" value="SGD"/>
</dbReference>
<dbReference type="GO" id="GO:0051301">
    <property type="term" value="P:cell division"/>
    <property type="evidence" value="ECO:0007669"/>
    <property type="project" value="UniProtKB-KW"/>
</dbReference>
<dbReference type="GO" id="GO:0007019">
    <property type="term" value="P:microtubule depolymerization"/>
    <property type="evidence" value="ECO:0000315"/>
    <property type="project" value="SGD"/>
</dbReference>
<dbReference type="GO" id="GO:0007020">
    <property type="term" value="P:microtubule nucleation"/>
    <property type="evidence" value="ECO:0000315"/>
    <property type="project" value="SGD"/>
</dbReference>
<dbReference type="GO" id="GO:0007064">
    <property type="term" value="P:mitotic sister chromatid cohesion"/>
    <property type="evidence" value="ECO:0000315"/>
    <property type="project" value="SGD"/>
</dbReference>
<dbReference type="GO" id="GO:0031578">
    <property type="term" value="P:mitotic spindle orientation checkpoint signaling"/>
    <property type="evidence" value="ECO:0000316"/>
    <property type="project" value="SGD"/>
</dbReference>
<dbReference type="GO" id="GO:0007026">
    <property type="term" value="P:negative regulation of microtubule depolymerization"/>
    <property type="evidence" value="ECO:0000315"/>
    <property type="project" value="SGD"/>
</dbReference>
<dbReference type="GO" id="GO:0030473">
    <property type="term" value="P:nuclear migration along microtubule"/>
    <property type="evidence" value="ECO:0000315"/>
    <property type="project" value="SGD"/>
</dbReference>
<dbReference type="GO" id="GO:0031116">
    <property type="term" value="P:positive regulation of microtubule polymerization"/>
    <property type="evidence" value="ECO:0000314"/>
    <property type="project" value="SGD"/>
</dbReference>
<dbReference type="GO" id="GO:0035372">
    <property type="term" value="P:protein localization to microtubule"/>
    <property type="evidence" value="ECO:0000318"/>
    <property type="project" value="GO_Central"/>
</dbReference>
<dbReference type="GO" id="GO:1904825">
    <property type="term" value="P:protein localization to microtubule plus-end"/>
    <property type="evidence" value="ECO:0000315"/>
    <property type="project" value="SGD"/>
</dbReference>
<dbReference type="GO" id="GO:0031110">
    <property type="term" value="P:regulation of microtubule polymerization or depolymerization"/>
    <property type="evidence" value="ECO:0000318"/>
    <property type="project" value="GO_Central"/>
</dbReference>
<dbReference type="GO" id="GO:0051225">
    <property type="term" value="P:spindle assembly"/>
    <property type="evidence" value="ECO:0000318"/>
    <property type="project" value="GO_Central"/>
</dbReference>
<dbReference type="FunFam" id="1.20.5.1430:FF:000007">
    <property type="entry name" value="Protein BIM1"/>
    <property type="match status" value="1"/>
</dbReference>
<dbReference type="FunFam" id="1.10.418.10:FF:000028">
    <property type="entry name" value="RP/EB family microtubule-associated protein"/>
    <property type="match status" value="1"/>
</dbReference>
<dbReference type="Gene3D" id="1.20.5.1430">
    <property type="match status" value="1"/>
</dbReference>
<dbReference type="Gene3D" id="1.10.418.10">
    <property type="entry name" value="Calponin-like domain"/>
    <property type="match status" value="1"/>
</dbReference>
<dbReference type="InterPro" id="IPR001715">
    <property type="entry name" value="CH_dom"/>
</dbReference>
<dbReference type="InterPro" id="IPR036872">
    <property type="entry name" value="CH_dom_sf"/>
</dbReference>
<dbReference type="InterPro" id="IPR004953">
    <property type="entry name" value="EB1_C"/>
</dbReference>
<dbReference type="InterPro" id="IPR036133">
    <property type="entry name" value="EB1_C_sf"/>
</dbReference>
<dbReference type="InterPro" id="IPR027328">
    <property type="entry name" value="MAPRE"/>
</dbReference>
<dbReference type="PANTHER" id="PTHR10623">
    <property type="entry name" value="MICROTUBULE-ASSOCIATED PROTEIN RP/EB FAMILY MEMBER"/>
    <property type="match status" value="1"/>
</dbReference>
<dbReference type="Pfam" id="PF03271">
    <property type="entry name" value="EB1"/>
    <property type="match status" value="1"/>
</dbReference>
<dbReference type="SUPFAM" id="SSF47576">
    <property type="entry name" value="Calponin-homology domain, CH-domain"/>
    <property type="match status" value="1"/>
</dbReference>
<dbReference type="SUPFAM" id="SSF140612">
    <property type="entry name" value="EB1 dimerisation domain-like"/>
    <property type="match status" value="1"/>
</dbReference>
<dbReference type="PROSITE" id="PS50021">
    <property type="entry name" value="CH"/>
    <property type="match status" value="1"/>
</dbReference>
<dbReference type="PROSITE" id="PS51230">
    <property type="entry name" value="EB1_C"/>
    <property type="match status" value="1"/>
</dbReference>
<gene>
    <name type="primary">BIM1</name>
    <name type="ordered locus">YER016W</name>
</gene>